<evidence type="ECO:0000250" key="1"/>
<evidence type="ECO:0000250" key="2">
    <source>
        <dbReference type="UniProtKB" id="P29022"/>
    </source>
</evidence>
<evidence type="ECO:0000255" key="3"/>
<evidence type="ECO:0000255" key="4">
    <source>
        <dbReference type="PROSITE-ProRule" id="PRU00261"/>
    </source>
</evidence>
<evidence type="ECO:0000305" key="5"/>
<gene>
    <name type="primary">CHTB3</name>
</gene>
<reference key="1">
    <citation type="journal article" date="1994" name="Plant Mol. Biol.">
        <title>Primary structure and expression of mRNAs encoding basic chitinase and 1,3-beta-glucanase in potato.</title>
        <authorList>
            <person name="Beerhues L."/>
            <person name="Kombrink E."/>
        </authorList>
    </citation>
    <scope>NUCLEOTIDE SEQUENCE [MRNA]</scope>
    <source>
        <strain>cv. Datura</strain>
        <tissue>Leaf</tissue>
    </source>
</reference>
<reference key="2">
    <citation type="journal article" date="1989" name="Plant Mol. Biol.">
        <title>Isolation and nucleotide sequence of cDNA clones encoding potato chitinase genes.</title>
        <authorList>
            <person name="Laflamme D."/>
            <person name="Roxby R."/>
        </authorList>
    </citation>
    <scope>NUCLEOTIDE SEQUENCE [MRNA] OF 3-318</scope>
</reference>
<feature type="signal peptide" evidence="3">
    <location>
        <begin position="1" status="less than"/>
        <end position="18"/>
    </location>
</feature>
<feature type="chain" id="PRO_0000005324" description="Endochitinase 3">
    <location>
        <begin position="19"/>
        <end position="311"/>
    </location>
</feature>
<feature type="propeptide" id="PRO_0000005325" description="Removed in mature form, vacuolar targeting" evidence="3">
    <location>
        <begin position="312"/>
        <end position="318"/>
    </location>
</feature>
<feature type="domain" description="Chitin-binding type-1" evidence="4">
    <location>
        <begin position="19"/>
        <end position="60"/>
    </location>
</feature>
<feature type="active site" description="Proton donor" evidence="2">
    <location>
        <position position="134"/>
    </location>
</feature>
<feature type="disulfide bond" evidence="4">
    <location>
        <begin position="21"/>
        <end position="36"/>
    </location>
</feature>
<feature type="disulfide bond" evidence="4">
    <location>
        <begin position="30"/>
        <end position="42"/>
    </location>
</feature>
<feature type="disulfide bond" evidence="4">
    <location>
        <begin position="35"/>
        <end position="49"/>
    </location>
</feature>
<feature type="disulfide bond" evidence="4">
    <location>
        <begin position="54"/>
        <end position="58"/>
    </location>
</feature>
<feature type="disulfide bond" evidence="4">
    <location>
        <begin position="89"/>
        <end position="152"/>
    </location>
</feature>
<feature type="disulfide bond" evidence="4">
    <location>
        <begin position="164"/>
        <end position="172"/>
    </location>
</feature>
<feature type="disulfide bond" evidence="4">
    <location>
        <begin position="271"/>
        <end position="303"/>
    </location>
</feature>
<feature type="sequence conflict" description="In Ref. 2; CAA32351." evidence="5" ref="2">
    <original>AEQCGSQAGG</original>
    <variation>GSNVVHRPD</variation>
    <location>
        <begin position="18"/>
        <end position="27"/>
    </location>
</feature>
<feature type="non-terminal residue">
    <location>
        <position position="1"/>
    </location>
</feature>
<keyword id="KW-0119">Carbohydrate metabolism</keyword>
<keyword id="KW-0146">Chitin degradation</keyword>
<keyword id="KW-0147">Chitin-binding</keyword>
<keyword id="KW-1015">Disulfide bond</keyword>
<keyword id="KW-0326">Glycosidase</keyword>
<keyword id="KW-0378">Hydrolase</keyword>
<keyword id="KW-0611">Plant defense</keyword>
<keyword id="KW-0624">Polysaccharide degradation</keyword>
<keyword id="KW-1185">Reference proteome</keyword>
<keyword id="KW-0732">Signal</keyword>
<keyword id="KW-0926">Vacuole</keyword>
<name>CHI3_SOLTU</name>
<comment type="function">
    <text>Defense against chitin-containing fungal pathogens.</text>
</comment>
<comment type="catalytic activity">
    <reaction>
        <text>Random endo-hydrolysis of N-acetyl-beta-D-glucosaminide (1-&gt;4)-beta-linkages in chitin and chitodextrins.</text>
        <dbReference type="EC" id="3.2.1.14"/>
    </reaction>
</comment>
<comment type="subcellular location">
    <subcellularLocation>
        <location evidence="1">Vacuole</location>
    </subcellularLocation>
    <text evidence="1">Vacuolar and protoplast.</text>
</comment>
<comment type="developmental stage">
    <text>Highest levels in younger leaves or stems segments and in older ones. Leaves and stems of intermediate age show a decreased expression. Appreciable amounts are also found in old root segments, and carpels.</text>
</comment>
<comment type="induction">
    <text>In response to infection, elicitor, ethylene, wounding.</text>
</comment>
<comment type="similarity">
    <text evidence="5">Belongs to the glycosyl hydrolase 19 family. Chitinase class I subfamily.</text>
</comment>
<sequence length="318" mass="33799">EFTIFSLLFSLLLLNASAEQCGSQAGGALCAPGLCCSKFGWCGNTNDYCGPGNCQSQCPGGPGPSGDLGGVISNSMFDQMLNHRNDNACQGKNNFYSYNAFISAAGSFPGFGTTGDITARKREIAAFLAQTSHETTGGWPSAPDGPYAWGYCFLREQGSPGDYCTPSSQWPCAPGRKYFGRGPIQISHNYNYGPCGRAIGVDLLNNPDLVATDSVISFKSAIWFWMTPQSPKPSCHDVITGRWQPSGADQAANRVPGFGVITNIINGGLECGHGSDSRVQDRIGFYRRYCGILGVSPGDNLDCGNQRSFGNGLLVDTV</sequence>
<accession>P52405</accession>
<accession>Q43179</accession>
<proteinExistence type="evidence at transcript level"/>
<protein>
    <recommendedName>
        <fullName>Endochitinase 3</fullName>
        <ecNumber>3.2.1.14</ecNumber>
    </recommendedName>
</protein>
<dbReference type="EC" id="3.2.1.14"/>
<dbReference type="EMBL" id="U02607">
    <property type="protein sequence ID" value="AAA17409.1"/>
    <property type="molecule type" value="mRNA"/>
</dbReference>
<dbReference type="EMBL" id="X14133">
    <property type="protein sequence ID" value="CAA32351.1"/>
    <property type="molecule type" value="mRNA"/>
</dbReference>
<dbReference type="PIR" id="S43317">
    <property type="entry name" value="S43317"/>
</dbReference>
<dbReference type="SMR" id="P52405"/>
<dbReference type="FunCoup" id="P52405">
    <property type="interactions" value="211"/>
</dbReference>
<dbReference type="STRING" id="4113.P52405"/>
<dbReference type="CAZy" id="CBM18">
    <property type="family name" value="Carbohydrate-Binding Module Family 18"/>
</dbReference>
<dbReference type="CAZy" id="GH19">
    <property type="family name" value="Glycoside Hydrolase Family 19"/>
</dbReference>
<dbReference type="InParanoid" id="P52405"/>
<dbReference type="Proteomes" id="UP000011115">
    <property type="component" value="Unassembled WGS sequence"/>
</dbReference>
<dbReference type="ExpressionAtlas" id="P52405">
    <property type="expression patterns" value="baseline"/>
</dbReference>
<dbReference type="GO" id="GO:0005773">
    <property type="term" value="C:vacuole"/>
    <property type="evidence" value="ECO:0007669"/>
    <property type="project" value="UniProtKB-SubCell"/>
</dbReference>
<dbReference type="GO" id="GO:0008061">
    <property type="term" value="F:chitin binding"/>
    <property type="evidence" value="ECO:0007669"/>
    <property type="project" value="UniProtKB-KW"/>
</dbReference>
<dbReference type="GO" id="GO:0004568">
    <property type="term" value="F:chitinase activity"/>
    <property type="evidence" value="ECO:0000318"/>
    <property type="project" value="GO_Central"/>
</dbReference>
<dbReference type="GO" id="GO:0008843">
    <property type="term" value="F:endochitinase activity"/>
    <property type="evidence" value="ECO:0007669"/>
    <property type="project" value="UniProtKB-EC"/>
</dbReference>
<dbReference type="GO" id="GO:0016998">
    <property type="term" value="P:cell wall macromolecule catabolic process"/>
    <property type="evidence" value="ECO:0007669"/>
    <property type="project" value="InterPro"/>
</dbReference>
<dbReference type="GO" id="GO:0006032">
    <property type="term" value="P:chitin catabolic process"/>
    <property type="evidence" value="ECO:0007669"/>
    <property type="project" value="UniProtKB-KW"/>
</dbReference>
<dbReference type="GO" id="GO:0006952">
    <property type="term" value="P:defense response"/>
    <property type="evidence" value="ECO:0007669"/>
    <property type="project" value="UniProtKB-KW"/>
</dbReference>
<dbReference type="GO" id="GO:0000272">
    <property type="term" value="P:polysaccharide catabolic process"/>
    <property type="evidence" value="ECO:0007669"/>
    <property type="project" value="UniProtKB-KW"/>
</dbReference>
<dbReference type="CDD" id="cd00325">
    <property type="entry name" value="chitinase_GH19"/>
    <property type="match status" value="1"/>
</dbReference>
<dbReference type="CDD" id="cd06921">
    <property type="entry name" value="ChtBD1_GH19_hevein"/>
    <property type="match status" value="1"/>
</dbReference>
<dbReference type="FunFam" id="3.30.60.10:FF:000001">
    <property type="entry name" value="Basic endochitinase"/>
    <property type="match status" value="1"/>
</dbReference>
<dbReference type="FunFam" id="3.30.20.10:FF:000001">
    <property type="entry name" value="Endochitinase (Chitinase)"/>
    <property type="match status" value="1"/>
</dbReference>
<dbReference type="Gene3D" id="1.10.530.10">
    <property type="match status" value="1"/>
</dbReference>
<dbReference type="Gene3D" id="3.30.20.10">
    <property type="entry name" value="Endochitinase, domain 2"/>
    <property type="match status" value="1"/>
</dbReference>
<dbReference type="Gene3D" id="3.30.60.10">
    <property type="entry name" value="Endochitinase-like"/>
    <property type="match status" value="1"/>
</dbReference>
<dbReference type="InterPro" id="IPR001002">
    <property type="entry name" value="Chitin-bd_1"/>
</dbReference>
<dbReference type="InterPro" id="IPR018371">
    <property type="entry name" value="Chitin-binding_1_CS"/>
</dbReference>
<dbReference type="InterPro" id="IPR036861">
    <property type="entry name" value="Endochitinase-like_sf"/>
</dbReference>
<dbReference type="InterPro" id="IPR016283">
    <property type="entry name" value="Glyco_hydro_19"/>
</dbReference>
<dbReference type="InterPro" id="IPR000726">
    <property type="entry name" value="Glyco_hydro_19_cat"/>
</dbReference>
<dbReference type="InterPro" id="IPR023346">
    <property type="entry name" value="Lysozyme-like_dom_sf"/>
</dbReference>
<dbReference type="PANTHER" id="PTHR22595:SF198">
    <property type="entry name" value="CHITIN-BINDING TYPE-1 DOMAIN-CONTAINING PROTEIN"/>
    <property type="match status" value="1"/>
</dbReference>
<dbReference type="PANTHER" id="PTHR22595">
    <property type="entry name" value="CHITINASE-RELATED"/>
    <property type="match status" value="1"/>
</dbReference>
<dbReference type="Pfam" id="PF00187">
    <property type="entry name" value="Chitin_bind_1"/>
    <property type="match status" value="1"/>
</dbReference>
<dbReference type="Pfam" id="PF00182">
    <property type="entry name" value="Glyco_hydro_19"/>
    <property type="match status" value="1"/>
</dbReference>
<dbReference type="PIRSF" id="PIRSF001060">
    <property type="entry name" value="Endochitinase"/>
    <property type="match status" value="1"/>
</dbReference>
<dbReference type="PRINTS" id="PR00451">
    <property type="entry name" value="CHITINBINDNG"/>
</dbReference>
<dbReference type="SMART" id="SM00270">
    <property type="entry name" value="ChtBD1"/>
    <property type="match status" value="1"/>
</dbReference>
<dbReference type="SUPFAM" id="SSF53955">
    <property type="entry name" value="Lysozyme-like"/>
    <property type="match status" value="1"/>
</dbReference>
<dbReference type="SUPFAM" id="SSF57016">
    <property type="entry name" value="Plant lectins/antimicrobial peptides"/>
    <property type="match status" value="1"/>
</dbReference>
<dbReference type="PROSITE" id="PS00026">
    <property type="entry name" value="CHIT_BIND_I_1"/>
    <property type="match status" value="1"/>
</dbReference>
<dbReference type="PROSITE" id="PS50941">
    <property type="entry name" value="CHIT_BIND_I_2"/>
    <property type="match status" value="1"/>
</dbReference>
<dbReference type="PROSITE" id="PS00773">
    <property type="entry name" value="CHITINASE_19_1"/>
    <property type="match status" value="1"/>
</dbReference>
<dbReference type="PROSITE" id="PS00774">
    <property type="entry name" value="CHITINASE_19_2"/>
    <property type="match status" value="1"/>
</dbReference>
<organism>
    <name type="scientific">Solanum tuberosum</name>
    <name type="common">Potato</name>
    <dbReference type="NCBI Taxonomy" id="4113"/>
    <lineage>
        <taxon>Eukaryota</taxon>
        <taxon>Viridiplantae</taxon>
        <taxon>Streptophyta</taxon>
        <taxon>Embryophyta</taxon>
        <taxon>Tracheophyta</taxon>
        <taxon>Spermatophyta</taxon>
        <taxon>Magnoliopsida</taxon>
        <taxon>eudicotyledons</taxon>
        <taxon>Gunneridae</taxon>
        <taxon>Pentapetalae</taxon>
        <taxon>asterids</taxon>
        <taxon>lamiids</taxon>
        <taxon>Solanales</taxon>
        <taxon>Solanaceae</taxon>
        <taxon>Solanoideae</taxon>
        <taxon>Solaneae</taxon>
        <taxon>Solanum</taxon>
    </lineage>
</organism>